<organism>
    <name type="scientific">Candida glabrata (strain ATCC 2001 / BCRC 20586 / JCM 3761 / NBRC 0622 / NRRL Y-65 / CBS 138)</name>
    <name type="common">Yeast</name>
    <name type="synonym">Nakaseomyces glabratus</name>
    <dbReference type="NCBI Taxonomy" id="284593"/>
    <lineage>
        <taxon>Eukaryota</taxon>
        <taxon>Fungi</taxon>
        <taxon>Dikarya</taxon>
        <taxon>Ascomycota</taxon>
        <taxon>Saccharomycotina</taxon>
        <taxon>Saccharomycetes</taxon>
        <taxon>Saccharomycetales</taxon>
        <taxon>Saccharomycetaceae</taxon>
        <taxon>Nakaseomyces</taxon>
    </lineage>
</organism>
<reference key="1">
    <citation type="journal article" date="2004" name="Nature">
        <title>Genome evolution in yeasts.</title>
        <authorList>
            <person name="Dujon B."/>
            <person name="Sherman D."/>
            <person name="Fischer G."/>
            <person name="Durrens P."/>
            <person name="Casaregola S."/>
            <person name="Lafontaine I."/>
            <person name="de Montigny J."/>
            <person name="Marck C."/>
            <person name="Neuveglise C."/>
            <person name="Talla E."/>
            <person name="Goffard N."/>
            <person name="Frangeul L."/>
            <person name="Aigle M."/>
            <person name="Anthouard V."/>
            <person name="Babour A."/>
            <person name="Barbe V."/>
            <person name="Barnay S."/>
            <person name="Blanchin S."/>
            <person name="Beckerich J.-M."/>
            <person name="Beyne E."/>
            <person name="Bleykasten C."/>
            <person name="Boisrame A."/>
            <person name="Boyer J."/>
            <person name="Cattolico L."/>
            <person name="Confanioleri F."/>
            <person name="de Daruvar A."/>
            <person name="Despons L."/>
            <person name="Fabre E."/>
            <person name="Fairhead C."/>
            <person name="Ferry-Dumazet H."/>
            <person name="Groppi A."/>
            <person name="Hantraye F."/>
            <person name="Hennequin C."/>
            <person name="Jauniaux N."/>
            <person name="Joyet P."/>
            <person name="Kachouri R."/>
            <person name="Kerrest A."/>
            <person name="Koszul R."/>
            <person name="Lemaire M."/>
            <person name="Lesur I."/>
            <person name="Ma L."/>
            <person name="Muller H."/>
            <person name="Nicaud J.-M."/>
            <person name="Nikolski M."/>
            <person name="Oztas S."/>
            <person name="Ozier-Kalogeropoulos O."/>
            <person name="Pellenz S."/>
            <person name="Potier S."/>
            <person name="Richard G.-F."/>
            <person name="Straub M.-L."/>
            <person name="Suleau A."/>
            <person name="Swennen D."/>
            <person name="Tekaia F."/>
            <person name="Wesolowski-Louvel M."/>
            <person name="Westhof E."/>
            <person name="Wirth B."/>
            <person name="Zeniou-Meyer M."/>
            <person name="Zivanovic Y."/>
            <person name="Bolotin-Fukuhara M."/>
            <person name="Thierry A."/>
            <person name="Bouchier C."/>
            <person name="Caudron B."/>
            <person name="Scarpelli C."/>
            <person name="Gaillardin C."/>
            <person name="Weissenbach J."/>
            <person name="Wincker P."/>
            <person name="Souciet J.-L."/>
        </authorList>
    </citation>
    <scope>NUCLEOTIDE SEQUENCE [LARGE SCALE GENOMIC DNA]</scope>
    <source>
        <strain>ATCC 2001 / BCRC 20586 / JCM 3761 / NBRC 0622 / NRRL Y-65 / CBS 138</strain>
    </source>
</reference>
<keyword id="KW-0968">Cytoplasmic vesicle</keyword>
<keyword id="KW-0256">Endoplasmic reticulum</keyword>
<keyword id="KW-0931">ER-Golgi transport</keyword>
<keyword id="KW-0333">Golgi apparatus</keyword>
<keyword id="KW-0342">GTP-binding</keyword>
<keyword id="KW-0378">Hydrolase</keyword>
<keyword id="KW-0472">Membrane</keyword>
<keyword id="KW-0547">Nucleotide-binding</keyword>
<keyword id="KW-0653">Protein transport</keyword>
<keyword id="KW-1185">Reference proteome</keyword>
<keyword id="KW-0813">Transport</keyword>
<proteinExistence type="inferred from homology"/>
<feature type="chain" id="PRO_0000295511" description="Small COPII coat GTPase SAR1">
    <location>
        <begin position="1"/>
        <end position="189"/>
    </location>
</feature>
<feature type="binding site" evidence="1">
    <location>
        <begin position="29"/>
        <end position="36"/>
    </location>
    <ligand>
        <name>GTP</name>
        <dbReference type="ChEBI" id="CHEBI:37565"/>
    </ligand>
</feature>
<feature type="binding site" evidence="1">
    <location>
        <begin position="72"/>
        <end position="75"/>
    </location>
    <ligand>
        <name>GTP</name>
        <dbReference type="ChEBI" id="CHEBI:37565"/>
    </ligand>
</feature>
<feature type="binding site" evidence="1">
    <location>
        <begin position="131"/>
        <end position="134"/>
    </location>
    <ligand>
        <name>GTP</name>
        <dbReference type="ChEBI" id="CHEBI:37565"/>
    </ligand>
</feature>
<accession>Q6FUZ9</accession>
<name>SAR1_CANGA</name>
<comment type="function">
    <text evidence="1">Small GTPase component of the coat protein complex II (COPII) which promotes the formation of transport vesicles from the endoplasmic reticulum (ER). The coat has two main functions, the physical deformation of the endoplasmic reticulum membrane into vesicles and the selection of cargo molecules. SAR1 controls the coat assembly in a stepwise manner. Activated SAR1-GTP binds to membranes first and recruits the SEC23/24 complex. These SEC23/24-SAR1 prebudding intermediates are then collected by the SEC13/31 complex as subunits polymerize to form coated transport vesicles. Conversion to SAR1-GDP triggers coat release and recycles COPII subunits (By similarity).</text>
</comment>
<comment type="catalytic activity">
    <reaction>
        <text>GTP + H2O = GDP + phosphate + H(+)</text>
        <dbReference type="Rhea" id="RHEA:19669"/>
        <dbReference type="ChEBI" id="CHEBI:15377"/>
        <dbReference type="ChEBI" id="CHEBI:15378"/>
        <dbReference type="ChEBI" id="CHEBI:37565"/>
        <dbReference type="ChEBI" id="CHEBI:43474"/>
        <dbReference type="ChEBI" id="CHEBI:58189"/>
    </reaction>
</comment>
<comment type="subunit">
    <text evidence="1">COPII is composed of at least 5 proteins: the SEC23/24 complex, the SEC13/31 complex and SAR1.</text>
</comment>
<comment type="subcellular location">
    <subcellularLocation>
        <location evidence="1">Cytoplasmic vesicle</location>
        <location evidence="1">COPII-coated vesicle membrane</location>
        <topology evidence="1">Peripheral membrane protein</topology>
        <orientation evidence="1">Cytoplasmic side</orientation>
    </subcellularLocation>
    <subcellularLocation>
        <location evidence="1">Endoplasmic reticulum membrane</location>
        <topology evidence="1">Peripheral membrane protein</topology>
        <orientation evidence="1">Cytoplasmic side</orientation>
    </subcellularLocation>
    <subcellularLocation>
        <location evidence="1">Golgi apparatus membrane</location>
        <topology evidence="1">Peripheral membrane protein</topology>
        <orientation evidence="1">Cytoplasmic side</orientation>
    </subcellularLocation>
</comment>
<comment type="similarity">
    <text evidence="2">Belongs to the small GTPase superfamily. SAR1 family.</text>
</comment>
<protein>
    <recommendedName>
        <fullName>Small COPII coat GTPase SAR1</fullName>
        <ecNumber>3.6.5.-</ecNumber>
    </recommendedName>
</protein>
<gene>
    <name type="primary">SAR1</name>
    <name type="ordered locus">CAGL0E05896g</name>
</gene>
<sequence>MVWDVFGWFRDVLASLGLWNKHGKLLFLGLDNAGKTTLLHMLKNDRLATLQPTWHPTSEELAIGNIKFTTFDLGGHVQARRLWKDYFPEVNGIVFLVDSADPDRFDEARVELDALFNITELKDVPFVILGNKIDAANAVSEAELRSALGLLNTTGSQRIEGQRPVEVFMCSVVMRNGYLEAFQWLSQYI</sequence>
<dbReference type="EC" id="3.6.5.-"/>
<dbReference type="EMBL" id="CR380951">
    <property type="protein sequence ID" value="CAG58864.1"/>
    <property type="molecule type" value="Genomic_DNA"/>
</dbReference>
<dbReference type="RefSeq" id="XP_445945.1">
    <property type="nucleotide sequence ID" value="XM_445945.1"/>
</dbReference>
<dbReference type="SMR" id="Q6FUZ9"/>
<dbReference type="FunCoup" id="Q6FUZ9">
    <property type="interactions" value="995"/>
</dbReference>
<dbReference type="STRING" id="284593.Q6FUZ9"/>
<dbReference type="EnsemblFungi" id="CAGL0E05896g-T">
    <property type="protein sequence ID" value="CAGL0E05896g-T-p1"/>
    <property type="gene ID" value="CAGL0E05896g"/>
</dbReference>
<dbReference type="KEGG" id="cgr:2887444"/>
<dbReference type="CGD" id="CAL0128930">
    <property type="gene designation" value="CAGL0E05896g"/>
</dbReference>
<dbReference type="VEuPathDB" id="FungiDB:B1J91_E05896g"/>
<dbReference type="VEuPathDB" id="FungiDB:CAGL0E05896g"/>
<dbReference type="eggNOG" id="KOG0077">
    <property type="taxonomic scope" value="Eukaryota"/>
</dbReference>
<dbReference type="HOGENOM" id="CLU_040729_6_0_1"/>
<dbReference type="InParanoid" id="Q6FUZ9"/>
<dbReference type="OMA" id="GLWNKHG"/>
<dbReference type="Proteomes" id="UP000002428">
    <property type="component" value="Chromosome E"/>
</dbReference>
<dbReference type="GO" id="GO:0030127">
    <property type="term" value="C:COPII vesicle coat"/>
    <property type="evidence" value="ECO:0007669"/>
    <property type="project" value="EnsemblFungi"/>
</dbReference>
<dbReference type="GO" id="GO:0070971">
    <property type="term" value="C:endoplasmic reticulum exit site"/>
    <property type="evidence" value="ECO:0007669"/>
    <property type="project" value="EnsemblFungi"/>
</dbReference>
<dbReference type="GO" id="GO:0005789">
    <property type="term" value="C:endoplasmic reticulum membrane"/>
    <property type="evidence" value="ECO:0007669"/>
    <property type="project" value="UniProtKB-SubCell"/>
</dbReference>
<dbReference type="GO" id="GO:0000139">
    <property type="term" value="C:Golgi membrane"/>
    <property type="evidence" value="ECO:0007669"/>
    <property type="project" value="UniProtKB-SubCell"/>
</dbReference>
<dbReference type="GO" id="GO:0044233">
    <property type="term" value="C:mitochondria-associated endoplasmic reticulum membrane contact site"/>
    <property type="evidence" value="ECO:0007669"/>
    <property type="project" value="EnsemblFungi"/>
</dbReference>
<dbReference type="GO" id="GO:0005739">
    <property type="term" value="C:mitochondrion"/>
    <property type="evidence" value="ECO:0007669"/>
    <property type="project" value="GOC"/>
</dbReference>
<dbReference type="GO" id="GO:0005525">
    <property type="term" value="F:GTP binding"/>
    <property type="evidence" value="ECO:0007669"/>
    <property type="project" value="UniProtKB-KW"/>
</dbReference>
<dbReference type="GO" id="GO:0003924">
    <property type="term" value="F:GTPase activity"/>
    <property type="evidence" value="ECO:0007669"/>
    <property type="project" value="EnsemblFungi"/>
</dbReference>
<dbReference type="GO" id="GO:0090158">
    <property type="term" value="P:endoplasmic reticulum membrane organization"/>
    <property type="evidence" value="ECO:0007669"/>
    <property type="project" value="EnsemblFungi"/>
</dbReference>
<dbReference type="GO" id="GO:0006888">
    <property type="term" value="P:endoplasmic reticulum to Golgi vesicle-mediated transport"/>
    <property type="evidence" value="ECO:0007669"/>
    <property type="project" value="EnsemblFungi"/>
</dbReference>
<dbReference type="GO" id="GO:0006886">
    <property type="term" value="P:intracellular protein transport"/>
    <property type="evidence" value="ECO:0007669"/>
    <property type="project" value="InterPro"/>
</dbReference>
<dbReference type="GO" id="GO:0000266">
    <property type="term" value="P:mitochondrial fission"/>
    <property type="evidence" value="ECO:0007669"/>
    <property type="project" value="EnsemblFungi"/>
</dbReference>
<dbReference type="GO" id="GO:0007006">
    <property type="term" value="P:mitochondrial membrane organization"/>
    <property type="evidence" value="ECO:0007669"/>
    <property type="project" value="EnsemblFungi"/>
</dbReference>
<dbReference type="GO" id="GO:0006998">
    <property type="term" value="P:nuclear envelope organization"/>
    <property type="evidence" value="ECO:0007669"/>
    <property type="project" value="EnsemblFungi"/>
</dbReference>
<dbReference type="GO" id="GO:1902953">
    <property type="term" value="P:positive regulation of ER to Golgi vesicle-mediated transport"/>
    <property type="evidence" value="ECO:0007669"/>
    <property type="project" value="EnsemblFungi"/>
</dbReference>
<dbReference type="GO" id="GO:0070863">
    <property type="term" value="P:positive regulation of protein exit from endoplasmic reticulum"/>
    <property type="evidence" value="ECO:0007669"/>
    <property type="project" value="EnsemblFungi"/>
</dbReference>
<dbReference type="GO" id="GO:0003400">
    <property type="term" value="P:regulation of COPII vesicle coating"/>
    <property type="evidence" value="ECO:0007669"/>
    <property type="project" value="EnsemblFungi"/>
</dbReference>
<dbReference type="GO" id="GO:0016050">
    <property type="term" value="P:vesicle organization"/>
    <property type="evidence" value="ECO:0007669"/>
    <property type="project" value="EnsemblFungi"/>
</dbReference>
<dbReference type="CDD" id="cd00879">
    <property type="entry name" value="Sar1"/>
    <property type="match status" value="1"/>
</dbReference>
<dbReference type="FunFam" id="3.40.50.300:FF:000161">
    <property type="entry name" value="Small COPII coat GTPase"/>
    <property type="match status" value="1"/>
</dbReference>
<dbReference type="Gene3D" id="3.40.50.300">
    <property type="entry name" value="P-loop containing nucleotide triphosphate hydrolases"/>
    <property type="match status" value="1"/>
</dbReference>
<dbReference type="InterPro" id="IPR027417">
    <property type="entry name" value="P-loop_NTPase"/>
</dbReference>
<dbReference type="InterPro" id="IPR005225">
    <property type="entry name" value="Small_GTP-bd"/>
</dbReference>
<dbReference type="InterPro" id="IPR006689">
    <property type="entry name" value="Small_GTPase_ARF/SAR"/>
</dbReference>
<dbReference type="InterPro" id="IPR006687">
    <property type="entry name" value="Small_GTPase_SAR1"/>
</dbReference>
<dbReference type="NCBIfam" id="TIGR00231">
    <property type="entry name" value="small_GTP"/>
    <property type="match status" value="1"/>
</dbReference>
<dbReference type="PANTHER" id="PTHR45684">
    <property type="entry name" value="RE74312P"/>
    <property type="match status" value="1"/>
</dbReference>
<dbReference type="Pfam" id="PF00025">
    <property type="entry name" value="Arf"/>
    <property type="match status" value="1"/>
</dbReference>
<dbReference type="PRINTS" id="PR00328">
    <property type="entry name" value="SAR1GTPBP"/>
</dbReference>
<dbReference type="SMART" id="SM00177">
    <property type="entry name" value="ARF"/>
    <property type="match status" value="1"/>
</dbReference>
<dbReference type="SMART" id="SM00178">
    <property type="entry name" value="SAR"/>
    <property type="match status" value="1"/>
</dbReference>
<dbReference type="SUPFAM" id="SSF52540">
    <property type="entry name" value="P-loop containing nucleoside triphosphate hydrolases"/>
    <property type="match status" value="1"/>
</dbReference>
<dbReference type="PROSITE" id="PS51422">
    <property type="entry name" value="SAR1"/>
    <property type="match status" value="1"/>
</dbReference>
<evidence type="ECO:0000250" key="1"/>
<evidence type="ECO:0000305" key="2"/>